<protein>
    <recommendedName>
        <fullName evidence="1">Porphobilinogen deaminase</fullName>
        <shortName evidence="1">PBG</shortName>
        <ecNumber evidence="1">2.5.1.61</ecNumber>
    </recommendedName>
    <alternativeName>
        <fullName evidence="1">Hydroxymethylbilane synthase</fullName>
        <shortName evidence="1">HMBS</shortName>
    </alternativeName>
    <alternativeName>
        <fullName evidence="1">Pre-uroporphyrinogen synthase</fullName>
    </alternativeName>
</protein>
<name>HEM3_SHESA</name>
<sequence>MSENRIRIATRKSPLAMWQAEFVKAELERVHPGIVVELLPMSTKGDVILDTPLAKVGGKGLFVKELEVAMLEDQADIAVHSMKDVPVDFPEGLGLEVICEREDPRDAFVSNLYKSISELPLGATVGTSSLRRQCQLRASRPDLIIKDLRGNVGTRLAKLDNGEYDAIILAAAGLIRLKLSERIASFISAEESLPANGQGAVGIECRTNDERVKALLAPLEHLETRYRVIAERAMNTRLEGGCQVPIGAFAEIHGDEMTLRGLVGNPDGSEIIEGVITGPKTEATKLGVALAEELLSKGAKSILDAVYAKA</sequence>
<reference key="1">
    <citation type="submission" date="2006-09" db="EMBL/GenBank/DDBJ databases">
        <title>Complete sequence of chromosome 1 of Shewanella sp. ANA-3.</title>
        <authorList>
            <person name="Copeland A."/>
            <person name="Lucas S."/>
            <person name="Lapidus A."/>
            <person name="Barry K."/>
            <person name="Detter J.C."/>
            <person name="Glavina del Rio T."/>
            <person name="Hammon N."/>
            <person name="Israni S."/>
            <person name="Dalin E."/>
            <person name="Tice H."/>
            <person name="Pitluck S."/>
            <person name="Chertkov O."/>
            <person name="Brettin T."/>
            <person name="Bruce D."/>
            <person name="Han C."/>
            <person name="Tapia R."/>
            <person name="Gilna P."/>
            <person name="Schmutz J."/>
            <person name="Larimer F."/>
            <person name="Land M."/>
            <person name="Hauser L."/>
            <person name="Kyrpides N."/>
            <person name="Kim E."/>
            <person name="Newman D."/>
            <person name="Salticov C."/>
            <person name="Konstantinidis K."/>
            <person name="Klappenback J."/>
            <person name="Tiedje J."/>
            <person name="Richardson P."/>
        </authorList>
    </citation>
    <scope>NUCLEOTIDE SEQUENCE [LARGE SCALE GENOMIC DNA]</scope>
    <source>
        <strain>ANA-3</strain>
    </source>
</reference>
<comment type="function">
    <text evidence="1">Tetrapolymerization of the monopyrrole PBG into the hydroxymethylbilane pre-uroporphyrinogen in several discrete steps.</text>
</comment>
<comment type="catalytic activity">
    <reaction evidence="1">
        <text>4 porphobilinogen + H2O = hydroxymethylbilane + 4 NH4(+)</text>
        <dbReference type="Rhea" id="RHEA:13185"/>
        <dbReference type="ChEBI" id="CHEBI:15377"/>
        <dbReference type="ChEBI" id="CHEBI:28938"/>
        <dbReference type="ChEBI" id="CHEBI:57845"/>
        <dbReference type="ChEBI" id="CHEBI:58126"/>
        <dbReference type="EC" id="2.5.1.61"/>
    </reaction>
</comment>
<comment type="cofactor">
    <cofactor evidence="1">
        <name>dipyrromethane</name>
        <dbReference type="ChEBI" id="CHEBI:60342"/>
    </cofactor>
    <text evidence="1">Binds 1 dipyrromethane group covalently.</text>
</comment>
<comment type="pathway">
    <text evidence="1">Porphyrin-containing compound metabolism; protoporphyrin-IX biosynthesis; coproporphyrinogen-III from 5-aminolevulinate: step 2/4.</text>
</comment>
<comment type="subunit">
    <text evidence="1">Monomer.</text>
</comment>
<comment type="miscellaneous">
    <text evidence="1">The porphobilinogen subunits are added to the dipyrromethane group.</text>
</comment>
<comment type="similarity">
    <text evidence="1">Belongs to the HMBS family.</text>
</comment>
<dbReference type="EC" id="2.5.1.61" evidence="1"/>
<dbReference type="EMBL" id="CP000469">
    <property type="protein sequence ID" value="ABK46629.1"/>
    <property type="molecule type" value="Genomic_DNA"/>
</dbReference>
<dbReference type="RefSeq" id="WP_011621194.1">
    <property type="nucleotide sequence ID" value="NC_008577.1"/>
</dbReference>
<dbReference type="SMR" id="A0KS60"/>
<dbReference type="STRING" id="94122.Shewana3_0386"/>
<dbReference type="KEGG" id="shn:Shewana3_0386"/>
<dbReference type="eggNOG" id="COG0181">
    <property type="taxonomic scope" value="Bacteria"/>
</dbReference>
<dbReference type="HOGENOM" id="CLU_019704_0_2_6"/>
<dbReference type="OrthoDB" id="9810298at2"/>
<dbReference type="UniPathway" id="UPA00251">
    <property type="reaction ID" value="UER00319"/>
</dbReference>
<dbReference type="Proteomes" id="UP000002589">
    <property type="component" value="Chromosome"/>
</dbReference>
<dbReference type="GO" id="GO:0005737">
    <property type="term" value="C:cytoplasm"/>
    <property type="evidence" value="ECO:0007669"/>
    <property type="project" value="TreeGrafter"/>
</dbReference>
<dbReference type="GO" id="GO:0004418">
    <property type="term" value="F:hydroxymethylbilane synthase activity"/>
    <property type="evidence" value="ECO:0007669"/>
    <property type="project" value="UniProtKB-UniRule"/>
</dbReference>
<dbReference type="GO" id="GO:0006782">
    <property type="term" value="P:protoporphyrinogen IX biosynthetic process"/>
    <property type="evidence" value="ECO:0007669"/>
    <property type="project" value="UniProtKB-UniRule"/>
</dbReference>
<dbReference type="CDD" id="cd13646">
    <property type="entry name" value="PBP2_EcHMBS_like"/>
    <property type="match status" value="1"/>
</dbReference>
<dbReference type="FunFam" id="3.30.160.40:FF:000002">
    <property type="entry name" value="Porphobilinogen deaminase"/>
    <property type="match status" value="1"/>
</dbReference>
<dbReference type="FunFam" id="3.40.190.10:FF:000004">
    <property type="entry name" value="Porphobilinogen deaminase"/>
    <property type="match status" value="1"/>
</dbReference>
<dbReference type="FunFam" id="3.40.190.10:FF:000005">
    <property type="entry name" value="Porphobilinogen deaminase"/>
    <property type="match status" value="1"/>
</dbReference>
<dbReference type="Gene3D" id="3.40.190.10">
    <property type="entry name" value="Periplasmic binding protein-like II"/>
    <property type="match status" value="2"/>
</dbReference>
<dbReference type="Gene3D" id="3.30.160.40">
    <property type="entry name" value="Porphobilinogen deaminase, C-terminal domain"/>
    <property type="match status" value="1"/>
</dbReference>
<dbReference type="HAMAP" id="MF_00260">
    <property type="entry name" value="Porphobil_deam"/>
    <property type="match status" value="1"/>
</dbReference>
<dbReference type="InterPro" id="IPR000860">
    <property type="entry name" value="HemC"/>
</dbReference>
<dbReference type="InterPro" id="IPR022419">
    <property type="entry name" value="Porphobilin_deaminase_cofac_BS"/>
</dbReference>
<dbReference type="InterPro" id="IPR022417">
    <property type="entry name" value="Porphobilin_deaminase_N"/>
</dbReference>
<dbReference type="InterPro" id="IPR022418">
    <property type="entry name" value="Porphobilinogen_deaminase_C"/>
</dbReference>
<dbReference type="InterPro" id="IPR036803">
    <property type="entry name" value="Porphobilinogen_deaminase_C_sf"/>
</dbReference>
<dbReference type="NCBIfam" id="TIGR00212">
    <property type="entry name" value="hemC"/>
    <property type="match status" value="1"/>
</dbReference>
<dbReference type="PANTHER" id="PTHR11557">
    <property type="entry name" value="PORPHOBILINOGEN DEAMINASE"/>
    <property type="match status" value="1"/>
</dbReference>
<dbReference type="PANTHER" id="PTHR11557:SF0">
    <property type="entry name" value="PORPHOBILINOGEN DEAMINASE"/>
    <property type="match status" value="1"/>
</dbReference>
<dbReference type="Pfam" id="PF01379">
    <property type="entry name" value="Porphobil_deam"/>
    <property type="match status" value="1"/>
</dbReference>
<dbReference type="Pfam" id="PF03900">
    <property type="entry name" value="Porphobil_deamC"/>
    <property type="match status" value="1"/>
</dbReference>
<dbReference type="PIRSF" id="PIRSF001438">
    <property type="entry name" value="4pyrrol_synth_OHMeBilane_synth"/>
    <property type="match status" value="1"/>
</dbReference>
<dbReference type="PRINTS" id="PR00151">
    <property type="entry name" value="PORPHBDMNASE"/>
</dbReference>
<dbReference type="SUPFAM" id="SSF53850">
    <property type="entry name" value="Periplasmic binding protein-like II"/>
    <property type="match status" value="1"/>
</dbReference>
<dbReference type="SUPFAM" id="SSF54782">
    <property type="entry name" value="Porphobilinogen deaminase (hydroxymethylbilane synthase), C-terminal domain"/>
    <property type="match status" value="1"/>
</dbReference>
<dbReference type="PROSITE" id="PS00533">
    <property type="entry name" value="PORPHOBILINOGEN_DEAM"/>
    <property type="match status" value="1"/>
</dbReference>
<keyword id="KW-0627">Porphyrin biosynthesis</keyword>
<keyword id="KW-0808">Transferase</keyword>
<gene>
    <name evidence="1" type="primary">hemC</name>
    <name type="ordered locus">Shewana3_0386</name>
</gene>
<accession>A0KS60</accession>
<feature type="chain" id="PRO_0000304272" description="Porphobilinogen deaminase">
    <location>
        <begin position="1"/>
        <end position="310"/>
    </location>
</feature>
<feature type="modified residue" description="S-(dipyrrolylmethanemethyl)cysteine" evidence="1">
    <location>
        <position position="242"/>
    </location>
</feature>
<evidence type="ECO:0000255" key="1">
    <source>
        <dbReference type="HAMAP-Rule" id="MF_00260"/>
    </source>
</evidence>
<organism>
    <name type="scientific">Shewanella sp. (strain ANA-3)</name>
    <dbReference type="NCBI Taxonomy" id="94122"/>
    <lineage>
        <taxon>Bacteria</taxon>
        <taxon>Pseudomonadati</taxon>
        <taxon>Pseudomonadota</taxon>
        <taxon>Gammaproteobacteria</taxon>
        <taxon>Alteromonadales</taxon>
        <taxon>Shewanellaceae</taxon>
        <taxon>Shewanella</taxon>
    </lineage>
</organism>
<proteinExistence type="inferred from homology"/>